<name>DISA_BACHK</name>
<feature type="chain" id="PRO_0000255638" description="DNA integrity scanning protein DisA">
    <location>
        <begin position="1"/>
        <end position="357"/>
    </location>
</feature>
<feature type="domain" description="DAC" evidence="3">
    <location>
        <begin position="8"/>
        <end position="146"/>
    </location>
</feature>
<feature type="binding site" evidence="2">
    <location>
        <position position="75"/>
    </location>
    <ligand>
        <name>ATP</name>
        <dbReference type="ChEBI" id="CHEBI:30616"/>
    </ligand>
</feature>
<feature type="binding site" evidence="2">
    <location>
        <position position="93"/>
    </location>
    <ligand>
        <name>ATP</name>
        <dbReference type="ChEBI" id="CHEBI:30616"/>
    </ligand>
</feature>
<feature type="binding site" evidence="2">
    <location>
        <begin position="106"/>
        <end position="110"/>
    </location>
    <ligand>
        <name>ATP</name>
        <dbReference type="ChEBI" id="CHEBI:30616"/>
    </ligand>
</feature>
<comment type="function">
    <text evidence="2">Participates in a DNA-damage check-point that is active prior to asymmetric division when DNA is damaged. DisA forms globular foci that rapidly scan along the chromosomes during sporulation, searching for lesions. When a lesion is present, DisA pauses at the lesion site. This triggers a cellular response that culminates in a temporary block in sporulation initiation.</text>
</comment>
<comment type="function">
    <text evidence="2">Also has diadenylate cyclase activity, catalyzing the condensation of 2 ATP molecules into cyclic di-AMP (c-di-AMP). c-di-AMP acts as a signaling molecule that couples DNA integrity with progression of sporulation. The rise in c-di-AMP level generated by DisA while scanning the chromosome, operates as a positive signal that advances sporulation; upon encountering a lesion, the DisA focus arrests at the damaged site and halts c-di-AMP synthesis.</text>
</comment>
<comment type="catalytic activity">
    <reaction evidence="2">
        <text>2 ATP = 3',3'-c-di-AMP + 2 diphosphate</text>
        <dbReference type="Rhea" id="RHEA:35655"/>
        <dbReference type="ChEBI" id="CHEBI:30616"/>
        <dbReference type="ChEBI" id="CHEBI:33019"/>
        <dbReference type="ChEBI" id="CHEBI:71500"/>
        <dbReference type="EC" id="2.7.7.85"/>
    </reaction>
</comment>
<comment type="cofactor">
    <cofactor evidence="2">
        <name>Mg(2+)</name>
        <dbReference type="ChEBI" id="CHEBI:18420"/>
    </cofactor>
</comment>
<comment type="activity regulation">
    <text evidence="1">Diadenylate cyclase activity is inhibited by the interaction with RadA.</text>
</comment>
<comment type="subunit">
    <text evidence="2 4">Homooctamer (By similarity). Interacts with RadA.</text>
</comment>
<comment type="similarity">
    <text evidence="2">Belongs to the DisA family.</text>
</comment>
<protein>
    <recommendedName>
        <fullName evidence="2">DNA integrity scanning protein DisA</fullName>
    </recommendedName>
    <alternativeName>
        <fullName evidence="2">Cyclic di-AMP synthase</fullName>
        <shortName evidence="2">c-di-AMP synthase</shortName>
    </alternativeName>
    <alternativeName>
        <fullName evidence="2">Diadenylate cyclase</fullName>
        <ecNumber evidence="2">2.7.7.85</ecNumber>
    </alternativeName>
</protein>
<accession>Q6HPT4</accession>
<evidence type="ECO:0000250" key="1"/>
<evidence type="ECO:0000255" key="2">
    <source>
        <dbReference type="HAMAP-Rule" id="MF_01438"/>
    </source>
</evidence>
<evidence type="ECO:0000255" key="3">
    <source>
        <dbReference type="PROSITE-ProRule" id="PRU01130"/>
    </source>
</evidence>
<evidence type="ECO:0000269" key="4">
    <source>
    </source>
</evidence>
<organism>
    <name type="scientific">Bacillus thuringiensis subsp. konkukian (strain 97-27)</name>
    <dbReference type="NCBI Taxonomy" id="281309"/>
    <lineage>
        <taxon>Bacteria</taxon>
        <taxon>Bacillati</taxon>
        <taxon>Bacillota</taxon>
        <taxon>Bacilli</taxon>
        <taxon>Bacillales</taxon>
        <taxon>Bacillaceae</taxon>
        <taxon>Bacillus</taxon>
        <taxon>Bacillus cereus group</taxon>
    </lineage>
</organism>
<keyword id="KW-0067">ATP-binding</keyword>
<keyword id="KW-0227">DNA damage</keyword>
<keyword id="KW-0234">DNA repair</keyword>
<keyword id="KW-0238">DNA-binding</keyword>
<keyword id="KW-0460">Magnesium</keyword>
<keyword id="KW-0547">Nucleotide-binding</keyword>
<keyword id="KW-0548">Nucleotidyltransferase</keyword>
<keyword id="KW-0808">Transferase</keyword>
<dbReference type="EC" id="2.7.7.85" evidence="2"/>
<dbReference type="EMBL" id="AE017355">
    <property type="protein sequence ID" value="AAT58907.1"/>
    <property type="molecule type" value="Genomic_DNA"/>
</dbReference>
<dbReference type="RefSeq" id="WP_000392168.1">
    <property type="nucleotide sequence ID" value="NC_005957.1"/>
</dbReference>
<dbReference type="RefSeq" id="YP_034436.1">
    <property type="nucleotide sequence ID" value="NC_005957.1"/>
</dbReference>
<dbReference type="SMR" id="Q6HPT4"/>
<dbReference type="GeneID" id="93010970"/>
<dbReference type="KEGG" id="btk:BT9727_0080"/>
<dbReference type="PATRIC" id="fig|281309.8.peg.81"/>
<dbReference type="HOGENOM" id="CLU_787128_0_0_9"/>
<dbReference type="Proteomes" id="UP000001301">
    <property type="component" value="Chromosome"/>
</dbReference>
<dbReference type="GO" id="GO:0004016">
    <property type="term" value="F:adenylate cyclase activity"/>
    <property type="evidence" value="ECO:0007669"/>
    <property type="project" value="TreeGrafter"/>
</dbReference>
<dbReference type="GO" id="GO:0005524">
    <property type="term" value="F:ATP binding"/>
    <property type="evidence" value="ECO:0007669"/>
    <property type="project" value="UniProtKB-UniRule"/>
</dbReference>
<dbReference type="GO" id="GO:0106408">
    <property type="term" value="F:diadenylate cyclase activity"/>
    <property type="evidence" value="ECO:0007669"/>
    <property type="project" value="UniProtKB-EC"/>
</dbReference>
<dbReference type="GO" id="GO:0003677">
    <property type="term" value="F:DNA binding"/>
    <property type="evidence" value="ECO:0007669"/>
    <property type="project" value="UniProtKB-UniRule"/>
</dbReference>
<dbReference type="GO" id="GO:0006281">
    <property type="term" value="P:DNA repair"/>
    <property type="evidence" value="ECO:0007669"/>
    <property type="project" value="UniProtKB-UniRule"/>
</dbReference>
<dbReference type="FunFam" id="1.10.150.20:FF:000023">
    <property type="entry name" value="DNA integrity scanning protein DisA"/>
    <property type="match status" value="1"/>
</dbReference>
<dbReference type="FunFam" id="1.20.1260.110:FF:000001">
    <property type="entry name" value="DNA integrity scanning protein DisA"/>
    <property type="match status" value="1"/>
</dbReference>
<dbReference type="FunFam" id="3.40.1700.10:FF:000001">
    <property type="entry name" value="DNA integrity scanning protein DisA"/>
    <property type="match status" value="1"/>
</dbReference>
<dbReference type="Gene3D" id="1.10.150.20">
    <property type="entry name" value="5' to 3' exonuclease, C-terminal subdomain"/>
    <property type="match status" value="1"/>
</dbReference>
<dbReference type="Gene3D" id="1.20.1260.110">
    <property type="entry name" value="DNA integrity scanning linker region"/>
    <property type="match status" value="1"/>
</dbReference>
<dbReference type="Gene3D" id="3.40.1700.10">
    <property type="entry name" value="DNA integrity scanning protein, DisA, N-terminal domain"/>
    <property type="match status" value="1"/>
</dbReference>
<dbReference type="HAMAP" id="MF_01438">
    <property type="entry name" value="DisA"/>
    <property type="match status" value="1"/>
</dbReference>
<dbReference type="InterPro" id="IPR050338">
    <property type="entry name" value="DisA"/>
</dbReference>
<dbReference type="InterPro" id="IPR038331">
    <property type="entry name" value="DisA_sf"/>
</dbReference>
<dbReference type="InterPro" id="IPR036888">
    <property type="entry name" value="DNA_integrity_DisA_N_sf"/>
</dbReference>
<dbReference type="InterPro" id="IPR018906">
    <property type="entry name" value="DNA_integrity_scan_DisA_link"/>
</dbReference>
<dbReference type="InterPro" id="IPR003390">
    <property type="entry name" value="DNA_integrity_scan_DisA_N"/>
</dbReference>
<dbReference type="InterPro" id="IPR023763">
    <property type="entry name" value="DNA_integrity_scanning_protein"/>
</dbReference>
<dbReference type="InterPro" id="IPR010994">
    <property type="entry name" value="RuvA_2-like"/>
</dbReference>
<dbReference type="NCBIfam" id="NF010009">
    <property type="entry name" value="PRK13482.1"/>
    <property type="match status" value="1"/>
</dbReference>
<dbReference type="PANTHER" id="PTHR34185">
    <property type="entry name" value="DIADENYLATE CYCLASE"/>
    <property type="match status" value="1"/>
</dbReference>
<dbReference type="PANTHER" id="PTHR34185:SF3">
    <property type="entry name" value="DNA INTEGRITY SCANNING PROTEIN DISA"/>
    <property type="match status" value="1"/>
</dbReference>
<dbReference type="Pfam" id="PF02457">
    <property type="entry name" value="DAC"/>
    <property type="match status" value="1"/>
</dbReference>
<dbReference type="Pfam" id="PF10635">
    <property type="entry name" value="DisA-linker"/>
    <property type="match status" value="1"/>
</dbReference>
<dbReference type="SUPFAM" id="SSF47781">
    <property type="entry name" value="RuvA domain 2-like"/>
    <property type="match status" value="1"/>
</dbReference>
<dbReference type="SUPFAM" id="SSF143597">
    <property type="entry name" value="YojJ-like"/>
    <property type="match status" value="1"/>
</dbReference>
<dbReference type="PROSITE" id="PS51794">
    <property type="entry name" value="DAC"/>
    <property type="match status" value="1"/>
</dbReference>
<gene>
    <name evidence="2" type="primary">disA</name>
    <name type="ordered locus">BT9727_0080</name>
</gene>
<proteinExistence type="evidence at protein level"/>
<sequence>MEENKQRVKSMINILQLVAPGTPLREGIDNVLRAQTGGLIVLGYNEQIKSIVDGGFHINCAFSPASLYELAKMDGALILNETGSKILIANAQLVPESSIDSIETGMRHRTAERVAKQTGSLVVAISQRRNVITLYQGNLRYTLKDIGVILTKANQAIQTLEKYKAVWNDGITNLGILEFEEVVTMSEVVHVLHSVEMVLRIKNEILSYIHELGTEGRLIRLQLTELLADLEAEAALLIKDYYQEKTQDHHQILKKLQELANTQLLEDSDLVKLLGYPGQTSLEESVTPRGYRITSKISRVPPLIIENLINRFKTLQGVCRATINELDDVEGIGEVRAKKIREGLKRIQEHLYMSRHN</sequence>
<reference key="1">
    <citation type="journal article" date="2006" name="J. Bacteriol.">
        <title>Pathogenomic sequence analysis of Bacillus cereus and Bacillus thuringiensis isolates closely related to Bacillus anthracis.</title>
        <authorList>
            <person name="Han C.S."/>
            <person name="Xie G."/>
            <person name="Challacombe J.F."/>
            <person name="Altherr M.R."/>
            <person name="Bhotika S.S."/>
            <person name="Bruce D."/>
            <person name="Campbell C.S."/>
            <person name="Campbell M.L."/>
            <person name="Chen J."/>
            <person name="Chertkov O."/>
            <person name="Cleland C."/>
            <person name="Dimitrijevic M."/>
            <person name="Doggett N.A."/>
            <person name="Fawcett J.J."/>
            <person name="Glavina T."/>
            <person name="Goodwin L.A."/>
            <person name="Hill K.K."/>
            <person name="Hitchcock P."/>
            <person name="Jackson P.J."/>
            <person name="Keim P."/>
            <person name="Kewalramani A.R."/>
            <person name="Longmire J."/>
            <person name="Lucas S."/>
            <person name="Malfatti S."/>
            <person name="McMurry K."/>
            <person name="Meincke L.J."/>
            <person name="Misra M."/>
            <person name="Moseman B.L."/>
            <person name="Mundt M."/>
            <person name="Munk A.C."/>
            <person name="Okinaka R.T."/>
            <person name="Parson-Quintana B."/>
            <person name="Reilly L.P."/>
            <person name="Richardson P."/>
            <person name="Robinson D.L."/>
            <person name="Rubin E."/>
            <person name="Saunders E."/>
            <person name="Tapia R."/>
            <person name="Tesmer J.G."/>
            <person name="Thayer N."/>
            <person name="Thompson L.S."/>
            <person name="Tice H."/>
            <person name="Ticknor L.O."/>
            <person name="Wills P.L."/>
            <person name="Brettin T.S."/>
            <person name="Gilna P."/>
        </authorList>
    </citation>
    <scope>NUCLEOTIDE SEQUENCE [LARGE SCALE GENOMIC DNA]</scope>
    <source>
        <strain>97-27</strain>
    </source>
</reference>
<reference key="2">
    <citation type="journal article" date="2013" name="J. Biol. Chem.">
        <title>Radiation-sensitive gene A (RadA) targets DisA, DNA integrity scanning protein A, to negatively affect cyclic di-AMP synthesis activity in Mycobacterium smegmatis.</title>
        <authorList>
            <person name="Zhang L."/>
            <person name="He Z.G."/>
        </authorList>
    </citation>
    <scope>INTERACTION WITH RADA</scope>
</reference>